<comment type="function">
    <text evidence="1">Binds directly to 16S ribosomal RNA.</text>
</comment>
<comment type="similarity">
    <text evidence="1">Belongs to the bacterial ribosomal protein bS20 family.</text>
</comment>
<organism>
    <name type="scientific">Mycobacterium ulcerans (strain Agy99)</name>
    <dbReference type="NCBI Taxonomy" id="362242"/>
    <lineage>
        <taxon>Bacteria</taxon>
        <taxon>Bacillati</taxon>
        <taxon>Actinomycetota</taxon>
        <taxon>Actinomycetes</taxon>
        <taxon>Mycobacteriales</taxon>
        <taxon>Mycobacteriaceae</taxon>
        <taxon>Mycobacterium</taxon>
        <taxon>Mycobacterium ulcerans group</taxon>
    </lineage>
</organism>
<feature type="chain" id="PRO_1000014611" description="Small ribosomal subunit protein bS20">
    <location>
        <begin position="1"/>
        <end position="87"/>
    </location>
</feature>
<feature type="region of interest" description="Disordered" evidence="2">
    <location>
        <begin position="1"/>
        <end position="28"/>
    </location>
</feature>
<evidence type="ECO:0000255" key="1">
    <source>
        <dbReference type="HAMAP-Rule" id="MF_00500"/>
    </source>
</evidence>
<evidence type="ECO:0000256" key="2">
    <source>
        <dbReference type="SAM" id="MobiDB-lite"/>
    </source>
</evidence>
<evidence type="ECO:0000305" key="3"/>
<proteinExistence type="inferred from homology"/>
<protein>
    <recommendedName>
        <fullName evidence="1">Small ribosomal subunit protein bS20</fullName>
    </recommendedName>
    <alternativeName>
        <fullName evidence="3">30S ribosomal protein S20</fullName>
    </alternativeName>
</protein>
<sequence length="87" mass="9610">MANIKSQQKRNRTNERARLRNKSVKSSLRTAVRSFRDAAHSGDKEKAAELLVSTNRKLDKAASKGVIHKNQAANKKSALARALNKLG</sequence>
<accession>A0PTY6</accession>
<keyword id="KW-0687">Ribonucleoprotein</keyword>
<keyword id="KW-0689">Ribosomal protein</keyword>
<keyword id="KW-0694">RNA-binding</keyword>
<keyword id="KW-0699">rRNA-binding</keyword>
<name>RS20_MYCUA</name>
<dbReference type="EMBL" id="CP000325">
    <property type="protein sequence ID" value="ABL05805.1"/>
    <property type="molecule type" value="Genomic_DNA"/>
</dbReference>
<dbReference type="RefSeq" id="WP_011741410.1">
    <property type="nucleotide sequence ID" value="NC_008611.1"/>
</dbReference>
<dbReference type="SMR" id="A0PTY6"/>
<dbReference type="GeneID" id="93438078"/>
<dbReference type="KEGG" id="mul:MUL_3676"/>
<dbReference type="eggNOG" id="COG0268">
    <property type="taxonomic scope" value="Bacteria"/>
</dbReference>
<dbReference type="HOGENOM" id="CLU_160655_0_1_11"/>
<dbReference type="Proteomes" id="UP000000765">
    <property type="component" value="Chromosome"/>
</dbReference>
<dbReference type="GO" id="GO:0005829">
    <property type="term" value="C:cytosol"/>
    <property type="evidence" value="ECO:0007669"/>
    <property type="project" value="TreeGrafter"/>
</dbReference>
<dbReference type="GO" id="GO:0015935">
    <property type="term" value="C:small ribosomal subunit"/>
    <property type="evidence" value="ECO:0007669"/>
    <property type="project" value="TreeGrafter"/>
</dbReference>
<dbReference type="GO" id="GO:0070181">
    <property type="term" value="F:small ribosomal subunit rRNA binding"/>
    <property type="evidence" value="ECO:0007669"/>
    <property type="project" value="TreeGrafter"/>
</dbReference>
<dbReference type="GO" id="GO:0003735">
    <property type="term" value="F:structural constituent of ribosome"/>
    <property type="evidence" value="ECO:0007669"/>
    <property type="project" value="InterPro"/>
</dbReference>
<dbReference type="GO" id="GO:0006412">
    <property type="term" value="P:translation"/>
    <property type="evidence" value="ECO:0007669"/>
    <property type="project" value="UniProtKB-UniRule"/>
</dbReference>
<dbReference type="FunFam" id="1.20.58.110:FF:000001">
    <property type="entry name" value="30S ribosomal protein S20"/>
    <property type="match status" value="1"/>
</dbReference>
<dbReference type="Gene3D" id="1.20.58.110">
    <property type="entry name" value="Ribosomal protein S20"/>
    <property type="match status" value="1"/>
</dbReference>
<dbReference type="HAMAP" id="MF_00500">
    <property type="entry name" value="Ribosomal_bS20"/>
    <property type="match status" value="1"/>
</dbReference>
<dbReference type="InterPro" id="IPR002583">
    <property type="entry name" value="Ribosomal_bS20"/>
</dbReference>
<dbReference type="InterPro" id="IPR036510">
    <property type="entry name" value="Ribosomal_bS20_sf"/>
</dbReference>
<dbReference type="NCBIfam" id="TIGR00029">
    <property type="entry name" value="S20"/>
    <property type="match status" value="1"/>
</dbReference>
<dbReference type="PANTHER" id="PTHR33398">
    <property type="entry name" value="30S RIBOSOMAL PROTEIN S20"/>
    <property type="match status" value="1"/>
</dbReference>
<dbReference type="PANTHER" id="PTHR33398:SF1">
    <property type="entry name" value="SMALL RIBOSOMAL SUBUNIT PROTEIN BS20C"/>
    <property type="match status" value="1"/>
</dbReference>
<dbReference type="Pfam" id="PF01649">
    <property type="entry name" value="Ribosomal_S20p"/>
    <property type="match status" value="1"/>
</dbReference>
<dbReference type="SUPFAM" id="SSF46992">
    <property type="entry name" value="Ribosomal protein S20"/>
    <property type="match status" value="1"/>
</dbReference>
<reference key="1">
    <citation type="journal article" date="2007" name="Genome Res.">
        <title>Reductive evolution and niche adaptation inferred from the genome of Mycobacterium ulcerans, the causative agent of Buruli ulcer.</title>
        <authorList>
            <person name="Stinear T.P."/>
            <person name="Seemann T."/>
            <person name="Pidot S."/>
            <person name="Frigui W."/>
            <person name="Reysset G."/>
            <person name="Garnier T."/>
            <person name="Meurice G."/>
            <person name="Simon D."/>
            <person name="Bouchier C."/>
            <person name="Ma L."/>
            <person name="Tichit M."/>
            <person name="Porter J.L."/>
            <person name="Ryan J."/>
            <person name="Johnson P.D.R."/>
            <person name="Davies J.K."/>
            <person name="Jenkin G.A."/>
            <person name="Small P.L.C."/>
            <person name="Jones L.M."/>
            <person name="Tekaia F."/>
            <person name="Laval F."/>
            <person name="Daffe M."/>
            <person name="Parkhill J."/>
            <person name="Cole S.T."/>
        </authorList>
    </citation>
    <scope>NUCLEOTIDE SEQUENCE [LARGE SCALE GENOMIC DNA]</scope>
    <source>
        <strain>Agy99</strain>
    </source>
</reference>
<gene>
    <name evidence="1" type="primary">rpsT</name>
    <name type="ordered locus">MUL_3676</name>
</gene>